<proteinExistence type="inferred from homology"/>
<dbReference type="EMBL" id="CP001019">
    <property type="protein sequence ID" value="ACJ17659.1"/>
    <property type="molecule type" value="Genomic_DNA"/>
</dbReference>
<dbReference type="RefSeq" id="WP_005770208.1">
    <property type="nucleotide sequence ID" value="NC_011527.1"/>
</dbReference>
<dbReference type="SMR" id="B6J329"/>
<dbReference type="KEGG" id="cbg:CbuG_0213"/>
<dbReference type="HOGENOM" id="CLU_075939_0_1_6"/>
<dbReference type="GO" id="GO:0022625">
    <property type="term" value="C:cytosolic large ribosomal subunit"/>
    <property type="evidence" value="ECO:0007669"/>
    <property type="project" value="TreeGrafter"/>
</dbReference>
<dbReference type="GO" id="GO:0008097">
    <property type="term" value="F:5S rRNA binding"/>
    <property type="evidence" value="ECO:0007669"/>
    <property type="project" value="InterPro"/>
</dbReference>
<dbReference type="GO" id="GO:0003735">
    <property type="term" value="F:structural constituent of ribosome"/>
    <property type="evidence" value="ECO:0007669"/>
    <property type="project" value="InterPro"/>
</dbReference>
<dbReference type="GO" id="GO:0006412">
    <property type="term" value="P:translation"/>
    <property type="evidence" value="ECO:0007669"/>
    <property type="project" value="UniProtKB-UniRule"/>
</dbReference>
<dbReference type="CDD" id="cd00495">
    <property type="entry name" value="Ribosomal_L25_TL5_CTC"/>
    <property type="match status" value="1"/>
</dbReference>
<dbReference type="FunFam" id="2.170.120.20:FF:000003">
    <property type="entry name" value="50S ribosomal protein L25"/>
    <property type="match status" value="1"/>
</dbReference>
<dbReference type="Gene3D" id="2.170.120.20">
    <property type="entry name" value="Ribosomal protein L25, beta domain"/>
    <property type="match status" value="1"/>
</dbReference>
<dbReference type="Gene3D" id="2.40.240.10">
    <property type="entry name" value="Ribosomal Protein L25, Chain P"/>
    <property type="match status" value="1"/>
</dbReference>
<dbReference type="HAMAP" id="MF_01334">
    <property type="entry name" value="Ribosomal_bL25_CTC"/>
    <property type="match status" value="1"/>
</dbReference>
<dbReference type="InterPro" id="IPR020056">
    <property type="entry name" value="Rbsml_bL25/Gln-tRNA_synth_N"/>
</dbReference>
<dbReference type="InterPro" id="IPR011035">
    <property type="entry name" value="Ribosomal_bL25/Gln-tRNA_synth"/>
</dbReference>
<dbReference type="InterPro" id="IPR020057">
    <property type="entry name" value="Ribosomal_bL25_b-dom"/>
</dbReference>
<dbReference type="InterPro" id="IPR037121">
    <property type="entry name" value="Ribosomal_bL25_C"/>
</dbReference>
<dbReference type="InterPro" id="IPR001021">
    <property type="entry name" value="Ribosomal_bL25_long"/>
</dbReference>
<dbReference type="InterPro" id="IPR029751">
    <property type="entry name" value="Ribosomal_L25_dom"/>
</dbReference>
<dbReference type="InterPro" id="IPR020930">
    <property type="entry name" value="Ribosomal_uL5_bac-type"/>
</dbReference>
<dbReference type="NCBIfam" id="TIGR00731">
    <property type="entry name" value="bL25_bact_ctc"/>
    <property type="match status" value="1"/>
</dbReference>
<dbReference type="NCBIfam" id="NF004128">
    <property type="entry name" value="PRK05618.1-2"/>
    <property type="match status" value="1"/>
</dbReference>
<dbReference type="NCBIfam" id="NF004130">
    <property type="entry name" value="PRK05618.1-5"/>
    <property type="match status" value="1"/>
</dbReference>
<dbReference type="NCBIfam" id="NF004612">
    <property type="entry name" value="PRK05943.1"/>
    <property type="match status" value="1"/>
</dbReference>
<dbReference type="PANTHER" id="PTHR33284">
    <property type="entry name" value="RIBOSOMAL PROTEIN L25/GLN-TRNA SYNTHETASE, ANTI-CODON-BINDING DOMAIN-CONTAINING PROTEIN"/>
    <property type="match status" value="1"/>
</dbReference>
<dbReference type="PANTHER" id="PTHR33284:SF1">
    <property type="entry name" value="RIBOSOMAL PROTEIN L25_GLN-TRNA SYNTHETASE, ANTI-CODON-BINDING DOMAIN-CONTAINING PROTEIN"/>
    <property type="match status" value="1"/>
</dbReference>
<dbReference type="Pfam" id="PF01386">
    <property type="entry name" value="Ribosomal_L25p"/>
    <property type="match status" value="1"/>
</dbReference>
<dbReference type="Pfam" id="PF14693">
    <property type="entry name" value="Ribosomal_TL5_C"/>
    <property type="match status" value="1"/>
</dbReference>
<dbReference type="SUPFAM" id="SSF50715">
    <property type="entry name" value="Ribosomal protein L25-like"/>
    <property type="match status" value="1"/>
</dbReference>
<evidence type="ECO:0000255" key="1">
    <source>
        <dbReference type="HAMAP-Rule" id="MF_01334"/>
    </source>
</evidence>
<evidence type="ECO:0000256" key="2">
    <source>
        <dbReference type="SAM" id="MobiDB-lite"/>
    </source>
</evidence>
<evidence type="ECO:0000305" key="3"/>
<organism>
    <name type="scientific">Coxiella burnetii (strain CbuG_Q212)</name>
    <name type="common">Coxiella burnetii (strain Q212)</name>
    <dbReference type="NCBI Taxonomy" id="434923"/>
    <lineage>
        <taxon>Bacteria</taxon>
        <taxon>Pseudomonadati</taxon>
        <taxon>Pseudomonadota</taxon>
        <taxon>Gammaproteobacteria</taxon>
        <taxon>Legionellales</taxon>
        <taxon>Coxiellaceae</taxon>
        <taxon>Coxiella</taxon>
    </lineage>
</organism>
<comment type="function">
    <text evidence="1">This is one of the proteins that binds to the 5S RNA in the ribosome where it forms part of the central protuberance.</text>
</comment>
<comment type="subunit">
    <text evidence="1">Part of the 50S ribosomal subunit; part of the 5S rRNA/L5/L18/L25 subcomplex. Contacts the 5S rRNA. Binds to the 5S rRNA independently of L5 and L18.</text>
</comment>
<comment type="similarity">
    <text evidence="1">Belongs to the bacterial ribosomal protein bL25 family. CTC subfamily.</text>
</comment>
<sequence length="244" mass="26539">MAAESFELIAELREFTGKSAARRMRRFEDKVPGTVYGAGKAPQSITLLQKDLLKALESESTFSSILTLKVGDKKQKVILKALQRHHTKPKIVHIDFQRIKASEKLIMNVPLHFLGEDDCPGVEAGGVVSHLQSEVEIRCLPADLPEYIEVDLSHLQLDESVHLSNLKLPAGVGLTSAVDEEHDSPIASVHMPRVSKADVEAEAAEAALAKEAATEAAEEEETEKPASEAEASGEAEQADTDKKE</sequence>
<reference key="1">
    <citation type="journal article" date="2009" name="Infect. Immun.">
        <title>Comparative genomics reveal extensive transposon-mediated genomic plasticity and diversity among potential effector proteins within the genus Coxiella.</title>
        <authorList>
            <person name="Beare P.A."/>
            <person name="Unsworth N."/>
            <person name="Andoh M."/>
            <person name="Voth D.E."/>
            <person name="Omsland A."/>
            <person name="Gilk S.D."/>
            <person name="Williams K.P."/>
            <person name="Sobral B.W."/>
            <person name="Kupko J.J. III"/>
            <person name="Porcella S.F."/>
            <person name="Samuel J.E."/>
            <person name="Heinzen R.A."/>
        </authorList>
    </citation>
    <scope>NUCLEOTIDE SEQUENCE [LARGE SCALE GENOMIC DNA]</scope>
    <source>
        <strain>CbuG_Q212</strain>
    </source>
</reference>
<name>RL25_COXB2</name>
<feature type="chain" id="PRO_1000142510" description="Large ribosomal subunit protein bL25">
    <location>
        <begin position="1"/>
        <end position="244"/>
    </location>
</feature>
<feature type="region of interest" description="Disordered" evidence="2">
    <location>
        <begin position="197"/>
        <end position="244"/>
    </location>
</feature>
<feature type="compositionally biased region" description="Low complexity" evidence="2">
    <location>
        <begin position="204"/>
        <end position="215"/>
    </location>
</feature>
<keyword id="KW-0687">Ribonucleoprotein</keyword>
<keyword id="KW-0689">Ribosomal protein</keyword>
<keyword id="KW-0694">RNA-binding</keyword>
<keyword id="KW-0699">rRNA-binding</keyword>
<protein>
    <recommendedName>
        <fullName evidence="1">Large ribosomal subunit protein bL25</fullName>
    </recommendedName>
    <alternativeName>
        <fullName evidence="3">50S ribosomal protein L25</fullName>
    </alternativeName>
    <alternativeName>
        <fullName evidence="1">General stress protein CTC</fullName>
    </alternativeName>
</protein>
<gene>
    <name evidence="1" type="primary">rplY</name>
    <name evidence="1" type="synonym">ctc</name>
    <name type="ordered locus">CbuG_0213</name>
</gene>
<accession>B6J329</accession>